<dbReference type="EMBL" id="X15942">
    <property type="protein sequence ID" value="CAA34068.1"/>
    <property type="molecule type" value="Genomic_DNA"/>
</dbReference>
<dbReference type="EMBL" id="AL939109">
    <property type="protein sequence ID" value="CAA20816.1"/>
    <property type="molecule type" value="Genomic_DNA"/>
</dbReference>
<dbReference type="EMBL" id="AL939127">
    <property type="protein sequence ID" value="CAA19613.1"/>
    <property type="molecule type" value="Genomic_DNA"/>
</dbReference>
<dbReference type="PIR" id="S06728">
    <property type="entry name" value="S06728"/>
</dbReference>
<dbReference type="RefSeq" id="NP_625881.1">
    <property type="nucleotide sequence ID" value="NC_003888.3"/>
</dbReference>
<dbReference type="RefSeq" id="NP_630489.1">
    <property type="nucleotide sequence ID" value="NC_003888.3"/>
</dbReference>
<dbReference type="PaxDb" id="100226-SCO1605"/>
<dbReference type="KEGG" id="sco:SCO1605"/>
<dbReference type="KEGG" id="sco:SCO6402"/>
<dbReference type="HOGENOM" id="CLU_2083469_0_0_11"/>
<dbReference type="InParanoid" id="P14705"/>
<dbReference type="Proteomes" id="UP000001973">
    <property type="component" value="Chromosome"/>
</dbReference>
<feature type="chain" id="PRO_0000075522" description="Mini-circle uncharacterized 12.9 kDa protein">
    <location>
        <begin position="1"/>
        <end position="117"/>
    </location>
</feature>
<name>YM1_STRCO</name>
<keyword id="KW-1185">Reference proteome</keyword>
<keyword id="KW-0814">Transposable element</keyword>
<organism>
    <name type="scientific">Streptomyces coelicolor (strain ATCC BAA-471 / A3(2) / M145)</name>
    <dbReference type="NCBI Taxonomy" id="100226"/>
    <lineage>
        <taxon>Bacteria</taxon>
        <taxon>Bacillati</taxon>
        <taxon>Actinomycetota</taxon>
        <taxon>Actinomycetes</taxon>
        <taxon>Kitasatosporales</taxon>
        <taxon>Streptomycetaceae</taxon>
        <taxon>Streptomyces</taxon>
        <taxon>Streptomyces albidoflavus group</taxon>
    </lineage>
</organism>
<sequence>MTVVTCVFLDHVHHDPAQGDSLIADVTSFLFGQVAGVVQSCVSDQLTAAGDLGLPRGHRLVEPSSRLQGKAIMVALPEDRWHVLTCEHTLEPVAFHLSHVLHESQQRHRRGRRRSKP</sequence>
<accession>P14705</accession>
<reference key="1">
    <citation type="journal article" date="1989" name="Mol. Microbiol.">
        <title>Structural and functional analysis of the mini-circle, a transposable element of Streptomyces coelicolor A3(2).</title>
        <authorList>
            <person name="Henderson D.J."/>
            <person name="Lydiate D.J."/>
            <person name="Hopwood D.A."/>
        </authorList>
    </citation>
    <scope>NUCLEOTIDE SEQUENCE [GENOMIC DNA]</scope>
    <source>
        <strain>A3(2) / NRRL B-16638</strain>
    </source>
</reference>
<reference key="2">
    <citation type="journal article" date="2002" name="Nature">
        <title>Complete genome sequence of the model actinomycete Streptomyces coelicolor A3(2).</title>
        <authorList>
            <person name="Bentley S.D."/>
            <person name="Chater K.F."/>
            <person name="Cerdeno-Tarraga A.-M."/>
            <person name="Challis G.L."/>
            <person name="Thomson N.R."/>
            <person name="James K.D."/>
            <person name="Harris D.E."/>
            <person name="Quail M.A."/>
            <person name="Kieser H."/>
            <person name="Harper D."/>
            <person name="Bateman A."/>
            <person name="Brown S."/>
            <person name="Chandra G."/>
            <person name="Chen C.W."/>
            <person name="Collins M."/>
            <person name="Cronin A."/>
            <person name="Fraser A."/>
            <person name="Goble A."/>
            <person name="Hidalgo J."/>
            <person name="Hornsby T."/>
            <person name="Howarth S."/>
            <person name="Huang C.-H."/>
            <person name="Kieser T."/>
            <person name="Larke L."/>
            <person name="Murphy L.D."/>
            <person name="Oliver K."/>
            <person name="O'Neil S."/>
            <person name="Rabbinowitsch E."/>
            <person name="Rajandream M.A."/>
            <person name="Rutherford K.M."/>
            <person name="Rutter S."/>
            <person name="Seeger K."/>
            <person name="Saunders D."/>
            <person name="Sharp S."/>
            <person name="Squares R."/>
            <person name="Squares S."/>
            <person name="Taylor K."/>
            <person name="Warren T."/>
            <person name="Wietzorrek A."/>
            <person name="Woodward J.R."/>
            <person name="Barrell B.G."/>
            <person name="Parkhill J."/>
            <person name="Hopwood D.A."/>
        </authorList>
    </citation>
    <scope>NUCLEOTIDE SEQUENCE [LARGE SCALE GENOMIC DNA]</scope>
    <source>
        <strain>ATCC BAA-471 / A3(2) / M145</strain>
    </source>
</reference>
<proteinExistence type="predicted"/>
<gene>
    <name type="ordered locus">SCO1605</name>
    <name type="ORF">SCI35.27</name>
</gene>
<gene>
    <name type="ordered locus">SCO6402</name>
    <name type="ORF">SC3C8.20</name>
</gene>
<protein>
    <recommendedName>
        <fullName>Mini-circle uncharacterized 12.9 kDa protein</fullName>
    </recommendedName>
</protein>